<gene>
    <name evidence="1" type="primary">rplS</name>
    <name type="ordered locus">MRA_2929</name>
</gene>
<organism>
    <name type="scientific">Mycobacterium tuberculosis (strain ATCC 25177 / H37Ra)</name>
    <dbReference type="NCBI Taxonomy" id="419947"/>
    <lineage>
        <taxon>Bacteria</taxon>
        <taxon>Bacillati</taxon>
        <taxon>Actinomycetota</taxon>
        <taxon>Actinomycetes</taxon>
        <taxon>Mycobacteriales</taxon>
        <taxon>Mycobacteriaceae</taxon>
        <taxon>Mycobacterium</taxon>
        <taxon>Mycobacterium tuberculosis complex</taxon>
    </lineage>
</organism>
<reference key="1">
    <citation type="journal article" date="2008" name="PLoS ONE">
        <title>Genetic basis of virulence attenuation revealed by comparative genomic analysis of Mycobacterium tuberculosis strain H37Ra versus H37Rv.</title>
        <authorList>
            <person name="Zheng H."/>
            <person name="Lu L."/>
            <person name="Wang B."/>
            <person name="Pu S."/>
            <person name="Zhang X."/>
            <person name="Zhu G."/>
            <person name="Shi W."/>
            <person name="Zhang L."/>
            <person name="Wang H."/>
            <person name="Wang S."/>
            <person name="Zhao G."/>
            <person name="Zhang Y."/>
        </authorList>
    </citation>
    <scope>NUCLEOTIDE SEQUENCE [LARGE SCALE GENOMIC DNA]</scope>
    <source>
        <strain>ATCC 25177 / H37Ra</strain>
    </source>
</reference>
<feature type="chain" id="PRO_1000049704" description="Large ribosomal subunit protein bL19">
    <location>
        <begin position="1"/>
        <end position="113"/>
    </location>
</feature>
<feature type="helix" evidence="3">
    <location>
        <begin position="2"/>
        <end position="8"/>
    </location>
</feature>
<feature type="helix" evidence="3">
    <location>
        <begin position="9"/>
        <end position="11"/>
    </location>
</feature>
<feature type="strand" evidence="3">
    <location>
        <begin position="24"/>
        <end position="30"/>
    </location>
</feature>
<feature type="strand" evidence="3">
    <location>
        <begin position="33"/>
        <end position="36"/>
    </location>
</feature>
<feature type="strand" evidence="3">
    <location>
        <begin position="39"/>
        <end position="50"/>
    </location>
</feature>
<feature type="strand" evidence="3">
    <location>
        <begin position="57"/>
        <end position="63"/>
    </location>
</feature>
<feature type="strand" evidence="3">
    <location>
        <begin position="65"/>
        <end position="74"/>
    </location>
</feature>
<feature type="strand" evidence="3">
    <location>
        <begin position="80"/>
        <end position="87"/>
    </location>
</feature>
<feature type="turn" evidence="3">
    <location>
        <begin position="105"/>
        <end position="107"/>
    </location>
</feature>
<protein>
    <recommendedName>
        <fullName evidence="1">Large ribosomal subunit protein bL19</fullName>
    </recommendedName>
    <alternativeName>
        <fullName evidence="2">50S ribosomal protein L19</fullName>
    </alternativeName>
</protein>
<keyword id="KW-0002">3D-structure</keyword>
<keyword id="KW-1185">Reference proteome</keyword>
<keyword id="KW-0687">Ribonucleoprotein</keyword>
<keyword id="KW-0689">Ribosomal protein</keyword>
<proteinExistence type="evidence at protein level"/>
<name>RL19_MYCTA</name>
<sequence length="113" mass="13013">MNRLDFVDKPSLRDDIPAFNPGDTINVHVKVIEGAKERLQVFKGVVIRRQGGGIRETFTVRKESYGVGVERTFPVHSPNIDHIEVVTRGDVRRAKLYYLRELRGKKAKIKEKR</sequence>
<comment type="function">
    <text evidence="1">This protein is located at the 30S-50S ribosomal subunit interface and may play a role in the structure and function of the aminoacyl-tRNA binding site.</text>
</comment>
<comment type="similarity">
    <text evidence="1">Belongs to the bacterial ribosomal protein bL19 family.</text>
</comment>
<dbReference type="EMBL" id="CP000611">
    <property type="protein sequence ID" value="ABQ74709.1"/>
    <property type="molecule type" value="Genomic_DNA"/>
</dbReference>
<dbReference type="RefSeq" id="WP_003414717.1">
    <property type="nucleotide sequence ID" value="NZ_CP016972.1"/>
</dbReference>
<dbReference type="PDB" id="7F0D">
    <property type="method" value="EM"/>
    <property type="resolution" value="3.30 A"/>
    <property type="chains" value="P=1-113"/>
</dbReference>
<dbReference type="PDBsum" id="7F0D"/>
<dbReference type="SMR" id="A5U6Q9"/>
<dbReference type="GeneID" id="45426891"/>
<dbReference type="KEGG" id="mra:MRA_2929"/>
<dbReference type="eggNOG" id="COG0335">
    <property type="taxonomic scope" value="Bacteria"/>
</dbReference>
<dbReference type="HOGENOM" id="CLU_103507_2_1_11"/>
<dbReference type="Proteomes" id="UP000001988">
    <property type="component" value="Chromosome"/>
</dbReference>
<dbReference type="GO" id="GO:0022625">
    <property type="term" value="C:cytosolic large ribosomal subunit"/>
    <property type="evidence" value="ECO:0007669"/>
    <property type="project" value="TreeGrafter"/>
</dbReference>
<dbReference type="GO" id="GO:0003735">
    <property type="term" value="F:structural constituent of ribosome"/>
    <property type="evidence" value="ECO:0007669"/>
    <property type="project" value="InterPro"/>
</dbReference>
<dbReference type="GO" id="GO:0006412">
    <property type="term" value="P:translation"/>
    <property type="evidence" value="ECO:0007669"/>
    <property type="project" value="UniProtKB-UniRule"/>
</dbReference>
<dbReference type="FunFam" id="2.30.30.790:FF:000001">
    <property type="entry name" value="50S ribosomal protein L19"/>
    <property type="match status" value="1"/>
</dbReference>
<dbReference type="Gene3D" id="2.30.30.790">
    <property type="match status" value="1"/>
</dbReference>
<dbReference type="HAMAP" id="MF_00402">
    <property type="entry name" value="Ribosomal_bL19"/>
    <property type="match status" value="1"/>
</dbReference>
<dbReference type="InterPro" id="IPR001857">
    <property type="entry name" value="Ribosomal_bL19"/>
</dbReference>
<dbReference type="InterPro" id="IPR018257">
    <property type="entry name" value="Ribosomal_bL19_CS"/>
</dbReference>
<dbReference type="InterPro" id="IPR038657">
    <property type="entry name" value="Ribosomal_bL19_sf"/>
</dbReference>
<dbReference type="InterPro" id="IPR008991">
    <property type="entry name" value="Translation_prot_SH3-like_sf"/>
</dbReference>
<dbReference type="NCBIfam" id="TIGR01024">
    <property type="entry name" value="rplS_bact"/>
    <property type="match status" value="1"/>
</dbReference>
<dbReference type="PANTHER" id="PTHR15680:SF9">
    <property type="entry name" value="LARGE RIBOSOMAL SUBUNIT PROTEIN BL19M"/>
    <property type="match status" value="1"/>
</dbReference>
<dbReference type="PANTHER" id="PTHR15680">
    <property type="entry name" value="RIBOSOMAL PROTEIN L19"/>
    <property type="match status" value="1"/>
</dbReference>
<dbReference type="Pfam" id="PF01245">
    <property type="entry name" value="Ribosomal_L19"/>
    <property type="match status" value="1"/>
</dbReference>
<dbReference type="PIRSF" id="PIRSF002191">
    <property type="entry name" value="Ribosomal_L19"/>
    <property type="match status" value="1"/>
</dbReference>
<dbReference type="PRINTS" id="PR00061">
    <property type="entry name" value="RIBOSOMALL19"/>
</dbReference>
<dbReference type="SUPFAM" id="SSF50104">
    <property type="entry name" value="Translation proteins SH3-like domain"/>
    <property type="match status" value="1"/>
</dbReference>
<dbReference type="PROSITE" id="PS01015">
    <property type="entry name" value="RIBOSOMAL_L19"/>
    <property type="match status" value="1"/>
</dbReference>
<evidence type="ECO:0000255" key="1">
    <source>
        <dbReference type="HAMAP-Rule" id="MF_00402"/>
    </source>
</evidence>
<evidence type="ECO:0000305" key="2"/>
<evidence type="ECO:0007829" key="3">
    <source>
        <dbReference type="PDB" id="7F0D"/>
    </source>
</evidence>
<accession>A5U6Q9</accession>